<organism>
    <name type="scientific">Sulfolobus spindle-shape virus 1</name>
    <name type="common">SSV1</name>
    <dbReference type="NCBI Taxonomy" id="244589"/>
    <lineage>
        <taxon>Viruses</taxon>
        <taxon>Viruses incertae sedis</taxon>
        <taxon>Fuselloviridae</taxon>
        <taxon>Alphafusellovirus</taxon>
    </lineage>
</organism>
<accession>P20200</accession>
<protein>
    <recommendedName>
        <fullName>Uncharacterized protein A-82</fullName>
    </recommendedName>
</protein>
<dbReference type="EMBL" id="X07234">
    <property type="protein sequence ID" value="CAA30205.1"/>
    <property type="molecule type" value="Genomic_DNA"/>
</dbReference>
<dbReference type="PIR" id="S03238">
    <property type="entry name" value="S03238"/>
</dbReference>
<dbReference type="RefSeq" id="NP_039803.1">
    <property type="nucleotide sequence ID" value="NC_001338.1"/>
</dbReference>
<dbReference type="GeneID" id="2559665"/>
<dbReference type="KEGG" id="vg:2559665"/>
<dbReference type="OrthoDB" id="24521at10239"/>
<dbReference type="Proteomes" id="UP000000854">
    <property type="component" value="Genome"/>
</dbReference>
<dbReference type="InterPro" id="IPR020261">
    <property type="entry name" value="DUF5493"/>
</dbReference>
<dbReference type="Pfam" id="PF17597">
    <property type="entry name" value="DUF5493"/>
    <property type="match status" value="1"/>
</dbReference>
<feature type="chain" id="PRO_0000223034" description="Uncharacterized protein A-82">
    <location>
        <begin position="1"/>
        <end position="82"/>
    </location>
</feature>
<keyword id="KW-1185">Reference proteome</keyword>
<proteinExistence type="predicted"/>
<name>A82_SSV1</name>
<sequence length="82" mass="9190">MSALGDVIYILGFLFPALGLISRNYLVNLMAFIIGTVAFLVFVQGYTDIAFSSSTFYLGVLPLLLGLVNLGYFFNWLREERI</sequence>
<comment type="function">
    <text>This protein may be involved in virus assembly.</text>
</comment>
<reference key="1">
    <citation type="journal article" date="1991" name="Virology">
        <title>Complete nucleotide sequence of the virus SSV1 of the archaebacterium Sulfolobus shibatae.</title>
        <authorList>
            <person name="Palm P."/>
            <person name="Schleper C."/>
            <person name="Grampp B."/>
            <person name="Yeats S."/>
            <person name="McWilliam P."/>
            <person name="Reiter W.-D."/>
            <person name="Zillig W."/>
        </authorList>
    </citation>
    <scope>NUCLEOTIDE SEQUENCE [GENOMIC DNA]</scope>
</reference>
<organismHost>
    <name type="scientific">Saccharolobus solfataricus</name>
    <name type="common">Sulfolobus solfataricus</name>
    <dbReference type="NCBI Taxonomy" id="2287"/>
</organismHost>